<organism>
    <name type="scientific">Prochlorococcus marinus (strain MIT 9312)</name>
    <dbReference type="NCBI Taxonomy" id="74546"/>
    <lineage>
        <taxon>Bacteria</taxon>
        <taxon>Bacillati</taxon>
        <taxon>Cyanobacteriota</taxon>
        <taxon>Cyanophyceae</taxon>
        <taxon>Synechococcales</taxon>
        <taxon>Prochlorococcaceae</taxon>
        <taxon>Prochlorococcus</taxon>
    </lineage>
</organism>
<comment type="function">
    <text evidence="1">Loosely associated component of the core of photosystem II (PSII), it is not always seen in crystals. PSII is a light-driven water plastoquinone oxidoreductase, using light energy to abstract electrons from H(2)O, generating a proton gradient subsequently used for ATP formation.</text>
</comment>
<comment type="subunit">
    <text evidence="2">PSII is composed of 1 copy each of membrane proteins PsbA, PsbB, PsbC, PsbD, PsbE, PsbF, PsbH, PsbI, PsbJ, PsbK, PsbL, PsbM, PsbT, PsbX, PsbY, Psb30/Ycf12, peripheral proteins PsbO, CyanoQ (PsbQ), PsbU, PsbV and a large number of cofactors. It forms dimeric complexes.</text>
</comment>
<comment type="subcellular location">
    <subcellularLocation>
        <location evidence="1">Cellular thylakoid membrane</location>
        <topology evidence="1">Single-pass membrane protein</topology>
    </subcellularLocation>
</comment>
<comment type="similarity">
    <text evidence="1">Belongs to the PsbY family.</text>
</comment>
<keyword id="KW-0472">Membrane</keyword>
<keyword id="KW-0602">Photosynthesis</keyword>
<keyword id="KW-0604">Photosystem II</keyword>
<keyword id="KW-0793">Thylakoid</keyword>
<keyword id="KW-0812">Transmembrane</keyword>
<keyword id="KW-1133">Transmembrane helix</keyword>
<proteinExistence type="inferred from homology"/>
<protein>
    <recommendedName>
        <fullName evidence="1">Photosystem II reaction center protein Y</fullName>
    </recommendedName>
</protein>
<reference key="1">
    <citation type="journal article" date="2006" name="Science">
        <title>Genomic islands and the ecology and evolution of Prochlorococcus.</title>
        <authorList>
            <person name="Coleman M.L."/>
            <person name="Sullivan M.B."/>
            <person name="Martiny A.C."/>
            <person name="Steglich C."/>
            <person name="Barry K."/>
            <person name="Delong E.F."/>
            <person name="Chisholm S.W."/>
        </authorList>
    </citation>
    <scope>NUCLEOTIDE SEQUENCE [LARGE SCALE GENOMIC DNA]</scope>
    <source>
        <strain>MIT 9312</strain>
    </source>
</reference>
<name>PSBY_PROM9</name>
<feature type="chain" id="PRO_1000045753" description="Photosystem II reaction center protein Y">
    <location>
        <begin position="1"/>
        <end position="37"/>
    </location>
</feature>
<feature type="transmembrane region" description="Helical" evidence="1">
    <location>
        <begin position="4"/>
        <end position="22"/>
    </location>
</feature>
<dbReference type="EMBL" id="CP000111">
    <property type="protein sequence ID" value="ABB50187.1"/>
    <property type="molecule type" value="Genomic_DNA"/>
</dbReference>
<dbReference type="RefSeq" id="WP_011376678.1">
    <property type="nucleotide sequence ID" value="NC_007577.1"/>
</dbReference>
<dbReference type="SMR" id="Q31AA8"/>
<dbReference type="STRING" id="74546.PMT9312_1128"/>
<dbReference type="KEGG" id="pmi:PMT9312_1128"/>
<dbReference type="HOGENOM" id="CLU_218393_0_0_3"/>
<dbReference type="Proteomes" id="UP000002715">
    <property type="component" value="Chromosome"/>
</dbReference>
<dbReference type="GO" id="GO:0009523">
    <property type="term" value="C:photosystem II"/>
    <property type="evidence" value="ECO:0007669"/>
    <property type="project" value="UniProtKB-KW"/>
</dbReference>
<dbReference type="GO" id="GO:0031676">
    <property type="term" value="C:plasma membrane-derived thylakoid membrane"/>
    <property type="evidence" value="ECO:0007669"/>
    <property type="project" value="UniProtKB-SubCell"/>
</dbReference>
<dbReference type="GO" id="GO:0030145">
    <property type="term" value="F:manganese ion binding"/>
    <property type="evidence" value="ECO:0007669"/>
    <property type="project" value="InterPro"/>
</dbReference>
<dbReference type="GO" id="GO:0015979">
    <property type="term" value="P:photosynthesis"/>
    <property type="evidence" value="ECO:0007669"/>
    <property type="project" value="UniProtKB-UniRule"/>
</dbReference>
<dbReference type="HAMAP" id="MF_00717">
    <property type="entry name" value="PSII_PsbY"/>
    <property type="match status" value="1"/>
</dbReference>
<dbReference type="InterPro" id="IPR009388">
    <property type="entry name" value="PSII_PsbY"/>
</dbReference>
<dbReference type="NCBIfam" id="NF009711">
    <property type="entry name" value="PRK13240.1"/>
    <property type="match status" value="1"/>
</dbReference>
<dbReference type="Pfam" id="PF06298">
    <property type="entry name" value="PsbY"/>
    <property type="match status" value="1"/>
</dbReference>
<gene>
    <name evidence="1" type="primary">psbY</name>
    <name type="ordered locus">PMT9312_1128</name>
</gene>
<evidence type="ECO:0000255" key="1">
    <source>
        <dbReference type="HAMAP-Rule" id="MF_00717"/>
    </source>
</evidence>
<evidence type="ECO:0000305" key="2"/>
<sequence length="37" mass="4299">MLRAIVVFAPIIAAVAWVVFNIQKPAREQWDRQFGEK</sequence>
<accession>Q31AA8</accession>